<accession>A5UA66</accession>
<feature type="chain" id="PRO_0000387384" description="tRNA1(Val) (adenine(37)-N6)-methyltransferase">
    <location>
        <begin position="1"/>
        <end position="232"/>
    </location>
</feature>
<gene>
    <name type="ordered locus">CGSHiEE_00885</name>
</gene>
<proteinExistence type="inferred from homology"/>
<dbReference type="EC" id="2.1.1.223" evidence="1"/>
<dbReference type="EMBL" id="CP000671">
    <property type="protein sequence ID" value="ABQ97667.1"/>
    <property type="molecule type" value="Genomic_DNA"/>
</dbReference>
<dbReference type="SMR" id="A5UA66"/>
<dbReference type="KEGG" id="hip:CGSHiEE_00885"/>
<dbReference type="HOGENOM" id="CLU_061983_0_0_6"/>
<dbReference type="GO" id="GO:0005737">
    <property type="term" value="C:cytoplasm"/>
    <property type="evidence" value="ECO:0007669"/>
    <property type="project" value="UniProtKB-SubCell"/>
</dbReference>
<dbReference type="GO" id="GO:0003676">
    <property type="term" value="F:nucleic acid binding"/>
    <property type="evidence" value="ECO:0007669"/>
    <property type="project" value="InterPro"/>
</dbReference>
<dbReference type="GO" id="GO:0016430">
    <property type="term" value="F:tRNA (adenine-N6)-methyltransferase activity"/>
    <property type="evidence" value="ECO:0007669"/>
    <property type="project" value="UniProtKB-UniRule"/>
</dbReference>
<dbReference type="GO" id="GO:0032259">
    <property type="term" value="P:methylation"/>
    <property type="evidence" value="ECO:0007669"/>
    <property type="project" value="UniProtKB-KW"/>
</dbReference>
<dbReference type="GO" id="GO:0008033">
    <property type="term" value="P:tRNA processing"/>
    <property type="evidence" value="ECO:0007669"/>
    <property type="project" value="UniProtKB-UniRule"/>
</dbReference>
<dbReference type="CDD" id="cd02440">
    <property type="entry name" value="AdoMet_MTases"/>
    <property type="match status" value="1"/>
</dbReference>
<dbReference type="Gene3D" id="3.40.50.150">
    <property type="entry name" value="Vaccinia Virus protein VP39"/>
    <property type="match status" value="1"/>
</dbReference>
<dbReference type="HAMAP" id="MF_01872">
    <property type="entry name" value="tRNA_methyltr_YfiC"/>
    <property type="match status" value="1"/>
</dbReference>
<dbReference type="InterPro" id="IPR002052">
    <property type="entry name" value="DNA_methylase_N6_adenine_CS"/>
</dbReference>
<dbReference type="InterPro" id="IPR029063">
    <property type="entry name" value="SAM-dependent_MTases_sf"/>
</dbReference>
<dbReference type="InterPro" id="IPR007848">
    <property type="entry name" value="Small_mtfrase_dom"/>
</dbReference>
<dbReference type="InterPro" id="IPR050210">
    <property type="entry name" value="tRNA_Adenine-N(6)_MTase"/>
</dbReference>
<dbReference type="InterPro" id="IPR022882">
    <property type="entry name" value="tRNA_adenine-N6_MeTrfase"/>
</dbReference>
<dbReference type="PANTHER" id="PTHR47739">
    <property type="entry name" value="TRNA1(VAL) (ADENINE(37)-N6)-METHYLTRANSFERASE"/>
    <property type="match status" value="1"/>
</dbReference>
<dbReference type="PANTHER" id="PTHR47739:SF1">
    <property type="entry name" value="TRNA1(VAL) (ADENINE(37)-N6)-METHYLTRANSFERASE"/>
    <property type="match status" value="1"/>
</dbReference>
<dbReference type="Pfam" id="PF05175">
    <property type="entry name" value="MTS"/>
    <property type="match status" value="1"/>
</dbReference>
<dbReference type="PRINTS" id="PR00507">
    <property type="entry name" value="N12N6MTFRASE"/>
</dbReference>
<dbReference type="SUPFAM" id="SSF53335">
    <property type="entry name" value="S-adenosyl-L-methionine-dependent methyltransferases"/>
    <property type="match status" value="1"/>
</dbReference>
<dbReference type="PROSITE" id="PS00092">
    <property type="entry name" value="N6_MTASE"/>
    <property type="match status" value="1"/>
</dbReference>
<name>TRMN6_HAEIE</name>
<organism>
    <name type="scientific">Haemophilus influenzae (strain PittEE)</name>
    <dbReference type="NCBI Taxonomy" id="374930"/>
    <lineage>
        <taxon>Bacteria</taxon>
        <taxon>Pseudomonadati</taxon>
        <taxon>Pseudomonadota</taxon>
        <taxon>Gammaproteobacteria</taxon>
        <taxon>Pasteurellales</taxon>
        <taxon>Pasteurellaceae</taxon>
        <taxon>Haemophilus</taxon>
    </lineage>
</organism>
<comment type="function">
    <text evidence="1">Specifically methylates the adenine in position 37 of tRNA(1)(Val) (anticodon cmo5UAC).</text>
</comment>
<comment type="catalytic activity">
    <reaction evidence="1">
        <text>adenosine(37) in tRNA1(Val) + S-adenosyl-L-methionine = N(6)-methyladenosine(37) in tRNA1(Val) + S-adenosyl-L-homocysteine + H(+)</text>
        <dbReference type="Rhea" id="RHEA:43160"/>
        <dbReference type="Rhea" id="RHEA-COMP:10369"/>
        <dbReference type="Rhea" id="RHEA-COMP:10370"/>
        <dbReference type="ChEBI" id="CHEBI:15378"/>
        <dbReference type="ChEBI" id="CHEBI:57856"/>
        <dbReference type="ChEBI" id="CHEBI:59789"/>
        <dbReference type="ChEBI" id="CHEBI:74411"/>
        <dbReference type="ChEBI" id="CHEBI:74449"/>
        <dbReference type="EC" id="2.1.1.223"/>
    </reaction>
</comment>
<comment type="subcellular location">
    <subcellularLocation>
        <location evidence="1">Cytoplasm</location>
    </subcellularLocation>
</comment>
<comment type="similarity">
    <text evidence="1">Belongs to the methyltransferase superfamily. tRNA (adenine-N(6)-)-methyltransferase family.</text>
</comment>
<protein>
    <recommendedName>
        <fullName evidence="1">tRNA1(Val) (adenine(37)-N6)-methyltransferase</fullName>
        <ecNumber evidence="1">2.1.1.223</ecNumber>
    </recommendedName>
    <alternativeName>
        <fullName evidence="1">tRNA m6A37 methyltransferase</fullName>
    </alternativeName>
</protein>
<evidence type="ECO:0000255" key="1">
    <source>
        <dbReference type="HAMAP-Rule" id="MF_01872"/>
    </source>
</evidence>
<reference key="1">
    <citation type="journal article" date="2007" name="Genome Biol.">
        <title>Characterization and modeling of the Haemophilus influenzae core and supragenomes based on the complete genomic sequences of Rd and 12 clinical nontypeable strains.</title>
        <authorList>
            <person name="Hogg J.S."/>
            <person name="Hu F.Z."/>
            <person name="Janto B."/>
            <person name="Boissy R."/>
            <person name="Hayes J."/>
            <person name="Keefe R."/>
            <person name="Post J.C."/>
            <person name="Ehrlich G.D."/>
        </authorList>
    </citation>
    <scope>NUCLEOTIDE SEQUENCE [LARGE SCALE GENOMIC DNA]</scope>
    <source>
        <strain>PittEE</strain>
    </source>
</reference>
<keyword id="KW-0963">Cytoplasm</keyword>
<keyword id="KW-0489">Methyltransferase</keyword>
<keyword id="KW-0949">S-adenosyl-L-methionine</keyword>
<keyword id="KW-0808">Transferase</keyword>
<keyword id="KW-0819">tRNA processing</keyword>
<sequence length="232" mass="26430">MSGFTFKQFHINQNSCAMKVSTDGILLGAWADVKHCKNILDMGSGTGLLALMLAQRTEENCQIQAVELDPIAAKQAQENINNSVWKNRIQLIQTDIQHFLQTTAQTFDLIVANPPYFEQGIACKNEERELARYTKQSHLNWLEWAATRLSENGRISFVLPYDAGKTLIKSTALFCIKQTNVITKIGKTPQRMLLTFAKQPQVLMQDQLVIYDADNQYTEAFIELTKDFYLKF</sequence>